<accession>A0A0H3AIG7</accession>
<evidence type="ECO:0000250" key="1">
    <source>
        <dbReference type="UniProtKB" id="Q9KS45"/>
    </source>
</evidence>
<evidence type="ECO:0000255" key="2">
    <source>
        <dbReference type="PROSITE-ProRule" id="PRU01108"/>
    </source>
</evidence>
<evidence type="ECO:0000269" key="3">
    <source>
    </source>
</evidence>
<evidence type="ECO:0000303" key="4">
    <source>
    </source>
</evidence>
<evidence type="ECO:0000305" key="5"/>
<evidence type="ECO:0000305" key="6">
    <source>
    </source>
</evidence>
<evidence type="ECO:0000312" key="7">
    <source>
        <dbReference type="EMBL" id="ABQ19866.1"/>
    </source>
</evidence>
<evidence type="ECO:0000312" key="8">
    <source>
        <dbReference type="Proteomes" id="UP000000249"/>
    </source>
</evidence>
<evidence type="ECO:0007744" key="9">
    <source>
        <dbReference type="PDB" id="4DTF"/>
    </source>
</evidence>
<evidence type="ECO:0007744" key="10">
    <source>
        <dbReference type="PDB" id="4DTH"/>
    </source>
</evidence>
<evidence type="ECO:0007744" key="11">
    <source>
        <dbReference type="PDB" id="4DTL"/>
    </source>
</evidence>
<evidence type="ECO:0007744" key="12">
    <source>
        <dbReference type="PDB" id="4E1C"/>
    </source>
</evidence>
<evidence type="ECO:0007744" key="13">
    <source>
        <dbReference type="PDB" id="4E1D"/>
    </source>
</evidence>
<evidence type="ECO:0007744" key="14">
    <source>
        <dbReference type="PDB" id="4E1F"/>
    </source>
</evidence>
<evidence type="ECO:0007829" key="15">
    <source>
        <dbReference type="PDB" id="4DTH"/>
    </source>
</evidence>
<keyword id="KW-0002">3D-structure</keyword>
<keyword id="KW-0067">ATP-binding</keyword>
<keyword id="KW-1035">Host cytoplasm</keyword>
<keyword id="KW-0436">Ligase</keyword>
<keyword id="KW-0460">Magnesium</keyword>
<keyword id="KW-0479">Metal-binding</keyword>
<keyword id="KW-0547">Nucleotide-binding</keyword>
<keyword id="KW-0964">Secreted</keyword>
<keyword id="KW-0800">Toxin</keyword>
<keyword id="KW-0843">Virulence</keyword>
<gene>
    <name evidence="4" type="primary">vgrG1</name>
    <name evidence="7" type="synonym">vgrG-1</name>
    <name evidence="7" type="ordered locus">VC0395_A1026</name>
</gene>
<protein>
    <recommendedName>
        <fullName evidence="5">Actin cross-linking toxin VgrG1</fullName>
        <ecNumber evidence="6">6.3.2.-</ecNumber>
    </recommendedName>
</protein>
<comment type="function">
    <text evidence="1 3">Part of the type VI secretion system (T6SS) specialized secretion system, which delivers several virulence factors in both prokaryotic and eukaryotic cells during infection (By similarity). Forms the spike at the tip of the elongating tube probably formed by hemolysin co-regulated protein/Hcp. Allows the delivery of the TseL antibacterial toxin to target cells where it exerts its toxicity (By similarity). Also acts directly as an actin-directed toxin that catalyzes the covalent cross-linking of host cytoplasmic monomeric actin. Mediates the cross-link between 'Lys-50' of one monomer and 'Glu-270' of another actin monomer, resulting in formation of highly toxic actin oligomers that cause cell rounding (PubMed:22898822). The toxin can be highly efficient at very low concentrations by acting on formin homology family proteins: toxic actin oligomers bind with high affinity to formins and adversely affect both nucleation and elongation abilities of formins, causing their potent inhibition in both profilin-dependent and independent manners (PubMed:22898822). Acts as an acid--amino-acid ligase that transfers the gamma-phosphoryl group of ATP to the 'Glu-270' actin residue, resulting in the formation of an activated acyl phosphate intermediate. This intermediate is further hydrolyzed and the energy of hydrolysis is utilized for the formation of the amide bond between actin subunits (PubMed:22898822).</text>
</comment>
<comment type="cofactor">
    <cofactor evidence="3">
        <name>Mg(2+)</name>
        <dbReference type="ChEBI" id="CHEBI:18420"/>
    </cofactor>
    <text evidence="3">Binds 2 Mg(2+) ions per subunit. Can also use Mn(2+) ions instead of Mg(2+).</text>
</comment>
<comment type="subunit">
    <text evidence="1">Interacts with protein VC1417.</text>
</comment>
<comment type="subcellular location">
    <subcellularLocation>
        <location evidence="1">Secreted</location>
    </subcellularLocation>
    <subcellularLocation>
        <location evidence="3">Host cytoplasm</location>
        <location evidence="3">Host cytosol</location>
    </subcellularLocation>
    <text evidence="1">Secreted via the type VI secretion system.</text>
</comment>
<comment type="similarity">
    <text evidence="5">Belongs to the VgrG protein family.</text>
</comment>
<reference key="1">
    <citation type="submission" date="2007-03" db="EMBL/GenBank/DDBJ databases">
        <authorList>
            <person name="Heidelberg J."/>
        </authorList>
    </citation>
    <scope>NUCLEOTIDE SEQUENCE [LARGE SCALE GENOMIC DNA]</scope>
    <source>
        <strain evidence="8">ATCC 39541 / Classical Ogawa 395 / O395</strain>
    </source>
</reference>
<reference key="2">
    <citation type="journal article" date="2008" name="PLoS ONE">
        <title>A recalibrated molecular clock and independent origins for the cholera pandemic clones.</title>
        <authorList>
            <person name="Feng L."/>
            <person name="Reeves P.R."/>
            <person name="Lan R."/>
            <person name="Ren Y."/>
            <person name="Gao C."/>
            <person name="Zhou Z."/>
            <person name="Ren Y."/>
            <person name="Cheng J."/>
            <person name="Wang W."/>
            <person name="Wang J."/>
            <person name="Qian W."/>
            <person name="Li D."/>
            <person name="Wang L."/>
        </authorList>
    </citation>
    <scope>NUCLEOTIDE SEQUENCE [LARGE SCALE GENOMIC DNA]</scope>
    <source>
        <strain>ATCC 39541 / Classical Ogawa 395 / O395</strain>
    </source>
</reference>
<reference key="3">
    <citation type="journal article" date="2012" name="J. Biol. Chem.">
        <title>Crystal structure of the VgrG1 actin cross-linking domain of the Vibrio cholerae type VI secretion system.</title>
        <authorList>
            <person name="Durand E."/>
            <person name="Derrez E."/>
            <person name="Audoly G."/>
            <person name="Spinelli S."/>
            <person name="Ortiz-Lombardia M."/>
            <person name="Raoult D."/>
            <person name="Cascales E."/>
            <person name="Cambillau C."/>
        </authorList>
    </citation>
    <scope>X-RAY CRYSTALLOGRAPHY (2.12 ANGSTROMS) OF 700-1095 IN COMPLEX WITH ATP AND MAGNESIUM</scope>
    <scope>FUNCTION</scope>
    <scope>COFACTOR</scope>
    <scope>SUBCELLULAR LOCATION</scope>
    <scope>MUTAGENESIS OF GLU-727</scope>
</reference>
<dbReference type="EC" id="6.3.2.-" evidence="6"/>
<dbReference type="EMBL" id="CP000627">
    <property type="protein sequence ID" value="ABQ19866.1"/>
    <property type="molecule type" value="Genomic_DNA"/>
</dbReference>
<dbReference type="EMBL" id="CP001235">
    <property type="protein sequence ID" value="ACP09541.1"/>
    <property type="molecule type" value="Genomic_DNA"/>
</dbReference>
<dbReference type="PDB" id="4DTD">
    <property type="method" value="X-ray"/>
    <property type="resolution" value="2.50 A"/>
    <property type="chains" value="A=700-1095"/>
</dbReference>
<dbReference type="PDB" id="4DTF">
    <property type="method" value="X-ray"/>
    <property type="resolution" value="2.12 A"/>
    <property type="chains" value="A=700-1095"/>
</dbReference>
<dbReference type="PDB" id="4DTH">
    <property type="method" value="X-ray"/>
    <property type="resolution" value="1.78 A"/>
    <property type="chains" value="A=700-1095"/>
</dbReference>
<dbReference type="PDB" id="4DTL">
    <property type="method" value="X-ray"/>
    <property type="resolution" value="2.39 A"/>
    <property type="chains" value="A=701-1095"/>
</dbReference>
<dbReference type="PDB" id="4E1C">
    <property type="method" value="X-ray"/>
    <property type="resolution" value="2.25 A"/>
    <property type="chains" value="A=700-1095"/>
</dbReference>
<dbReference type="PDB" id="4E1D">
    <property type="method" value="X-ray"/>
    <property type="resolution" value="2.49 A"/>
    <property type="chains" value="A=700-1095"/>
</dbReference>
<dbReference type="PDB" id="4E1F">
    <property type="method" value="X-ray"/>
    <property type="resolution" value="2.10 A"/>
    <property type="chains" value="A=700-1095"/>
</dbReference>
<dbReference type="PDBsum" id="4DTD"/>
<dbReference type="PDBsum" id="4DTF"/>
<dbReference type="PDBsum" id="4DTH"/>
<dbReference type="PDBsum" id="4DTL"/>
<dbReference type="PDBsum" id="4E1C"/>
<dbReference type="PDBsum" id="4E1D"/>
<dbReference type="PDBsum" id="4E1F"/>
<dbReference type="SMR" id="A0A0H3AIG7"/>
<dbReference type="KEGG" id="vco:VC0395_A1026"/>
<dbReference type="KEGG" id="vcr:VC395_1535"/>
<dbReference type="PATRIC" id="fig|345073.21.peg.1485"/>
<dbReference type="eggNOG" id="COG3501">
    <property type="taxonomic scope" value="Bacteria"/>
</dbReference>
<dbReference type="HOGENOM" id="CLU_008414_0_0_6"/>
<dbReference type="OrthoDB" id="4333945at2"/>
<dbReference type="EvolutionaryTrace" id="A0A0H3AIG7"/>
<dbReference type="PHI-base" id="PHI:9887"/>
<dbReference type="Proteomes" id="UP000000249">
    <property type="component" value="Chromosome 2"/>
</dbReference>
<dbReference type="GO" id="GO:0005576">
    <property type="term" value="C:extracellular region"/>
    <property type="evidence" value="ECO:0007669"/>
    <property type="project" value="UniProtKB-SubCell"/>
</dbReference>
<dbReference type="GO" id="GO:0044164">
    <property type="term" value="C:host cell cytosol"/>
    <property type="evidence" value="ECO:0007669"/>
    <property type="project" value="UniProtKB-SubCell"/>
</dbReference>
<dbReference type="GO" id="GO:0016881">
    <property type="term" value="F:acid-amino acid ligase activity"/>
    <property type="evidence" value="ECO:0000314"/>
    <property type="project" value="UniProtKB"/>
</dbReference>
<dbReference type="GO" id="GO:0005524">
    <property type="term" value="F:ATP binding"/>
    <property type="evidence" value="ECO:0000314"/>
    <property type="project" value="UniProtKB"/>
</dbReference>
<dbReference type="GO" id="GO:0000287">
    <property type="term" value="F:magnesium ion binding"/>
    <property type="evidence" value="ECO:0000314"/>
    <property type="project" value="UniProtKB"/>
</dbReference>
<dbReference type="GO" id="GO:0090729">
    <property type="term" value="F:toxin activity"/>
    <property type="evidence" value="ECO:0007669"/>
    <property type="project" value="UniProtKB-KW"/>
</dbReference>
<dbReference type="GO" id="GO:0030042">
    <property type="term" value="P:actin filament depolymerization"/>
    <property type="evidence" value="ECO:0000314"/>
    <property type="project" value="UniProtKB"/>
</dbReference>
<dbReference type="GO" id="GO:0018153">
    <property type="term" value="P:isopeptide cross-linking via N6-(L-isoglutamyl)-L-lysine"/>
    <property type="evidence" value="ECO:0000314"/>
    <property type="project" value="UniProtKB"/>
</dbReference>
<dbReference type="FunFam" id="1.10.3680.20:FF:000001">
    <property type="entry name" value="Actin cross-linking toxin VgrG1"/>
    <property type="match status" value="1"/>
</dbReference>
<dbReference type="FunFam" id="3.55.50.10:FF:000001">
    <property type="entry name" value="Actin cross-linking toxin VgrG1"/>
    <property type="match status" value="1"/>
</dbReference>
<dbReference type="Gene3D" id="2.30.110.50">
    <property type="match status" value="1"/>
</dbReference>
<dbReference type="Gene3D" id="4.10.220.110">
    <property type="match status" value="1"/>
</dbReference>
<dbReference type="Gene3D" id="1.10.3680.20">
    <property type="entry name" value="Actin cross-linking domain"/>
    <property type="match status" value="1"/>
</dbReference>
<dbReference type="Gene3D" id="3.55.50.10">
    <property type="entry name" value="Baseplate protein-like domains"/>
    <property type="match status" value="1"/>
</dbReference>
<dbReference type="Gene3D" id="2.40.50.230">
    <property type="entry name" value="Gp5 N-terminal domain"/>
    <property type="match status" value="1"/>
</dbReference>
<dbReference type="InterPro" id="IPR032074">
    <property type="entry name" value="ACD_dom"/>
</dbReference>
<dbReference type="InterPro" id="IPR006531">
    <property type="entry name" value="Gp5/Vgr_OB"/>
</dbReference>
<dbReference type="InterPro" id="IPR054030">
    <property type="entry name" value="Gp5_Vgr_C"/>
</dbReference>
<dbReference type="InterPro" id="IPR017847">
    <property type="entry name" value="T6SS_RhsGE_Vgr_subset"/>
</dbReference>
<dbReference type="InterPro" id="IPR006533">
    <property type="entry name" value="T6SS_Vgr_RhsGE"/>
</dbReference>
<dbReference type="InterPro" id="IPR050708">
    <property type="entry name" value="T6SS_VgrG/RHS"/>
</dbReference>
<dbReference type="InterPro" id="IPR037026">
    <property type="entry name" value="Vgr_OB-fold_dom_sf"/>
</dbReference>
<dbReference type="NCBIfam" id="TIGR01646">
    <property type="entry name" value="vgr_GE"/>
    <property type="match status" value="1"/>
</dbReference>
<dbReference type="NCBIfam" id="TIGR03361">
    <property type="entry name" value="VI_Rhs_Vgr"/>
    <property type="match status" value="1"/>
</dbReference>
<dbReference type="PANTHER" id="PTHR32305">
    <property type="match status" value="1"/>
</dbReference>
<dbReference type="PANTHER" id="PTHR32305:SF11">
    <property type="entry name" value="TYPE VI SECRETION SYSTEM SPIKE PROTEIN VGRG3"/>
    <property type="match status" value="1"/>
</dbReference>
<dbReference type="Pfam" id="PF16671">
    <property type="entry name" value="ACD"/>
    <property type="match status" value="1"/>
</dbReference>
<dbReference type="Pfam" id="PF22178">
    <property type="entry name" value="Gp5_trimer_C"/>
    <property type="match status" value="1"/>
</dbReference>
<dbReference type="Pfam" id="PF04717">
    <property type="entry name" value="Phage_base_V"/>
    <property type="match status" value="1"/>
</dbReference>
<dbReference type="Pfam" id="PF05954">
    <property type="entry name" value="Phage_GPD"/>
    <property type="match status" value="1"/>
</dbReference>
<dbReference type="SUPFAM" id="SSF69255">
    <property type="entry name" value="gp5 N-terminal domain-like"/>
    <property type="match status" value="1"/>
</dbReference>
<dbReference type="SUPFAM" id="SSF69349">
    <property type="entry name" value="Phage fibre proteins"/>
    <property type="match status" value="1"/>
</dbReference>
<dbReference type="SUPFAM" id="SSF69279">
    <property type="entry name" value="Phage tail proteins"/>
    <property type="match status" value="2"/>
</dbReference>
<dbReference type="PROSITE" id="PS51772">
    <property type="entry name" value="ACD"/>
    <property type="match status" value="1"/>
</dbReference>
<name>VGRG1_VIBC3</name>
<organism>
    <name type="scientific">Vibrio cholerae serotype O1 (strain ATCC 39541 / Classical Ogawa 395 / O395)</name>
    <dbReference type="NCBI Taxonomy" id="345073"/>
    <lineage>
        <taxon>Bacteria</taxon>
        <taxon>Pseudomonadati</taxon>
        <taxon>Pseudomonadota</taxon>
        <taxon>Gammaproteobacteria</taxon>
        <taxon>Vibrionales</taxon>
        <taxon>Vibrionaceae</taxon>
        <taxon>Vibrio</taxon>
    </lineage>
</organism>
<sequence>MATLAYSIEVEGLEDETLVVRGFHGQESLSNSVFLGQACYGFRYEVQLASRVSNLTAEQMVDKRAELKLYRNSQLVQRVHGIVRAFSQGDIGHHHTFYQLTLVPALERLSLRHNSRIFQKQTVPEILSILLQEMGINDYAFALKRDGVQREFCVQYRESDIDFLHRLAAEEGLVYSFVHEAGKHTLYFSDASDSLSKLPEPIPYNALVGGAIDTPYIHGLTYRTQAEVSEVQLKDYSFKKPAYSFLQTVQGTELDYQQTRYQHFDAPGRYKDDVNGAAFSQIRLDYLRRHAHTATGQSNEPLLRAGYKFDLQEHLDPAMNRDWVVVSINHQGEQPQALQEDGGSGATTYSNQFSLIPGHLHWRAEPQPKPQVDGPMIATVVGPEGEEIFCDEHGRVKIHFPWDRYSNGNEQSSCWVRVSQGWAGSQYGFIAIPRIGHEVIVEFLNGDPDQPIITGRTYHATNTPPYTLPEHKTKTVLRTETHQGEGFNELSFEDQAGKEQIYLHAQKDFDGLIENDQFTQIKHNQHLTVEWESREAVTGEQVLSIEGSLHVKTGKVRVNEAGTEIHVKAGQKVVIEAGSEITVKAGGSFVKVDPAGVHLSGALVNLNSGGSAGSGSGFGGAMPALPGGLEPAVALAPPQTISYQALLQAEQANVPAVKVCPLAAQEATPAVNSITPPPPPPIAPPMAPPQPIMNPQPTANAQPNLGRSTKATPDFPTHFPKSSIGIENELAGLVVAMPANSAQKFGYVKSAQGDALFMLTKDMNQGSYQRPPSLQDGKNYQNWQTHTVELVSYPCEMDDKAAVETRKQAMLWLATHFTTHIDQSNHQPLAPIQSEDGRFVIEITNAKHVIAAGNGISAESQGQTITMTPSGQQATVGVAAKGFGTSATPELRLLESAPWYQKSLKSQFASLTSAENLDDKELAANVFAYLTSIYLKTAELAKKFGIYINEWDPMSEQITPNANGLTDPKVKNAWEILPRTKPSKIVEILSKSDAKAVMKHIKPQLQSRYSESLSKNVFQYFQDGGEVAGHGINNATVGDKHSPELAILFEFRTVPNELQSYLPKTESTTKSEVKLLDQFDPMKRKTVIQQVESLV</sequence>
<feature type="chain" id="PRO_0000434119" description="Actin cross-linking toxin VgrG1">
    <location>
        <begin position="1"/>
        <end position="1095"/>
    </location>
</feature>
<feature type="domain" description="ACD" evidence="2">
    <location>
        <begin position="712"/>
        <end position="1095"/>
    </location>
</feature>
<feature type="binding site" evidence="3 10 11 12 13 14">
    <location>
        <begin position="723"/>
        <end position="727"/>
    </location>
    <ligand>
        <name>ATP</name>
        <dbReference type="ChEBI" id="CHEBI:30616"/>
    </ligand>
</feature>
<feature type="binding site" evidence="3 10 11 13">
    <location>
        <position position="727"/>
    </location>
    <ligand>
        <name>Mg(2+)</name>
        <dbReference type="ChEBI" id="CHEBI:18420"/>
        <label>1</label>
        <note>catalytic; for actin cross-linking activity</note>
    </ligand>
</feature>
<feature type="binding site" evidence="3 10 11 13">
    <location>
        <position position="727"/>
    </location>
    <ligand>
        <name>Mg(2+)</name>
        <dbReference type="ChEBI" id="CHEBI:18420"/>
        <label>2</label>
        <note>catalytic; for actin cross-linking activity</note>
    </ligand>
</feature>
<feature type="binding site" evidence="3 10 11 13">
    <location>
        <position position="789"/>
    </location>
    <ligand>
        <name>Mg(2+)</name>
        <dbReference type="ChEBI" id="CHEBI:18420"/>
        <label>2</label>
        <note>catalytic; for actin cross-linking activity</note>
    </ligand>
</feature>
<feature type="binding site" evidence="3 9 10 11 12 13 14">
    <location>
        <position position="792"/>
    </location>
    <ligand>
        <name>ATP</name>
        <dbReference type="ChEBI" id="CHEBI:30616"/>
    </ligand>
</feature>
<feature type="binding site" evidence="3 10 11 13">
    <location>
        <position position="873"/>
    </location>
    <ligand>
        <name>Mg(2+)</name>
        <dbReference type="ChEBI" id="CHEBI:18420"/>
        <label>1</label>
        <note>catalytic; for actin cross-linking activity</note>
    </ligand>
</feature>
<feature type="binding site" evidence="3 10 13">
    <location>
        <position position="979"/>
    </location>
    <ligand>
        <name>ATP</name>
        <dbReference type="ChEBI" id="CHEBI:30616"/>
    </ligand>
</feature>
<feature type="binding site" evidence="3 10 11 13">
    <location>
        <position position="1050"/>
    </location>
    <ligand>
        <name>Mg(2+)</name>
        <dbReference type="ChEBI" id="CHEBI:18420"/>
        <label>1</label>
        <note>catalytic; for actin cross-linking activity</note>
    </ligand>
</feature>
<feature type="mutagenesis site" description="Abolished actin cross-linking activity." evidence="3">
    <original>E</original>
    <variation>Q</variation>
    <location>
        <position position="727"/>
    </location>
</feature>
<feature type="strand" evidence="15">
    <location>
        <begin position="718"/>
        <end position="721"/>
    </location>
</feature>
<feature type="strand" evidence="15">
    <location>
        <begin position="723"/>
        <end position="729"/>
    </location>
</feature>
<feature type="strand" evidence="15">
    <location>
        <begin position="731"/>
        <end position="737"/>
    </location>
</feature>
<feature type="strand" evidence="15">
    <location>
        <begin position="743"/>
        <end position="750"/>
    </location>
</feature>
<feature type="strand" evidence="15">
    <location>
        <begin position="755"/>
        <end position="767"/>
    </location>
</feature>
<feature type="helix" evidence="15">
    <location>
        <begin position="772"/>
        <end position="774"/>
    </location>
</feature>
<feature type="strand" evidence="15">
    <location>
        <begin position="784"/>
        <end position="792"/>
    </location>
</feature>
<feature type="helix" evidence="15">
    <location>
        <begin position="800"/>
        <end position="823"/>
    </location>
</feature>
<feature type="strand" evidence="15">
    <location>
        <begin position="837"/>
        <end position="844"/>
    </location>
</feature>
<feature type="strand" evidence="15">
    <location>
        <begin position="849"/>
        <end position="852"/>
    </location>
</feature>
<feature type="strand" evidence="15">
    <location>
        <begin position="857"/>
        <end position="859"/>
    </location>
</feature>
<feature type="helix" evidence="15">
    <location>
        <begin position="869"/>
        <end position="871"/>
    </location>
</feature>
<feature type="strand" evidence="15">
    <location>
        <begin position="872"/>
        <end position="879"/>
    </location>
</feature>
<feature type="helix" evidence="15">
    <location>
        <begin position="880"/>
        <end position="882"/>
    </location>
</feature>
<feature type="helix" evidence="15">
    <location>
        <begin position="889"/>
        <end position="895"/>
    </location>
</feature>
<feature type="helix" evidence="15">
    <location>
        <begin position="904"/>
        <end position="911"/>
    </location>
</feature>
<feature type="turn" evidence="15">
    <location>
        <begin position="912"/>
        <end position="914"/>
    </location>
</feature>
<feature type="helix" evidence="15">
    <location>
        <begin position="920"/>
        <end position="944"/>
    </location>
</feature>
<feature type="helix" evidence="15">
    <location>
        <begin position="953"/>
        <end position="956"/>
    </location>
</feature>
<feature type="strand" evidence="15">
    <location>
        <begin position="962"/>
        <end position="964"/>
    </location>
</feature>
<feature type="helix" evidence="15">
    <location>
        <begin position="968"/>
        <end position="974"/>
    </location>
</feature>
<feature type="strand" evidence="15">
    <location>
        <begin position="975"/>
        <end position="978"/>
    </location>
</feature>
<feature type="helix" evidence="15">
    <location>
        <begin position="982"/>
        <end position="988"/>
    </location>
</feature>
<feature type="helix" evidence="15">
    <location>
        <begin position="991"/>
        <end position="1006"/>
    </location>
</feature>
<feature type="helix" evidence="15">
    <location>
        <begin position="1011"/>
        <end position="1022"/>
    </location>
</feature>
<feature type="strand" evidence="15">
    <location>
        <begin position="1027"/>
        <end position="1030"/>
    </location>
</feature>
<feature type="strand" evidence="15">
    <location>
        <begin position="1036"/>
        <end position="1039"/>
    </location>
</feature>
<feature type="strand" evidence="15">
    <location>
        <begin position="1042"/>
        <end position="1053"/>
    </location>
</feature>
<feature type="helix" evidence="15">
    <location>
        <begin position="1056"/>
        <end position="1061"/>
    </location>
</feature>
<proteinExistence type="evidence at protein level"/>